<protein>
    <recommendedName>
        <fullName evidence="1">Acetyl-coenzyme A carboxylase carboxyl transferase subunit alpha</fullName>
        <shortName evidence="1">ACCase subunit alpha</shortName>
        <shortName evidence="1">Acetyl-CoA carboxylase carboxyltransferase subunit alpha</shortName>
        <ecNumber evidence="1">2.1.3.15</ecNumber>
    </recommendedName>
</protein>
<comment type="function">
    <text evidence="1">Component of the acetyl coenzyme A carboxylase (ACC) complex. First, biotin carboxylase catalyzes the carboxylation of biotin on its carrier protein (BCCP) and then the CO(2) group is transferred by the carboxyltransferase to acetyl-CoA to form malonyl-CoA.</text>
</comment>
<comment type="catalytic activity">
    <reaction evidence="1">
        <text>N(6)-carboxybiotinyl-L-lysyl-[protein] + acetyl-CoA = N(6)-biotinyl-L-lysyl-[protein] + malonyl-CoA</text>
        <dbReference type="Rhea" id="RHEA:54728"/>
        <dbReference type="Rhea" id="RHEA-COMP:10505"/>
        <dbReference type="Rhea" id="RHEA-COMP:10506"/>
        <dbReference type="ChEBI" id="CHEBI:57288"/>
        <dbReference type="ChEBI" id="CHEBI:57384"/>
        <dbReference type="ChEBI" id="CHEBI:83144"/>
        <dbReference type="ChEBI" id="CHEBI:83145"/>
        <dbReference type="EC" id="2.1.3.15"/>
    </reaction>
</comment>
<comment type="pathway">
    <text evidence="1">Lipid metabolism; malonyl-CoA biosynthesis; malonyl-CoA from acetyl-CoA: step 1/1.</text>
</comment>
<comment type="subunit">
    <text evidence="1">Acetyl-CoA carboxylase is a heterohexamer composed of biotin carboxyl carrier protein (AccB), biotin carboxylase (AccC) and two subunits each of ACCase subunit alpha (AccA) and ACCase subunit beta (AccD).</text>
</comment>
<comment type="subcellular location">
    <subcellularLocation>
        <location evidence="1">Cytoplasm</location>
    </subcellularLocation>
</comment>
<comment type="similarity">
    <text evidence="1">Belongs to the AccA family.</text>
</comment>
<organism>
    <name type="scientific">Brucella melitensis biotype 2 (strain ATCC 23457)</name>
    <dbReference type="NCBI Taxonomy" id="546272"/>
    <lineage>
        <taxon>Bacteria</taxon>
        <taxon>Pseudomonadati</taxon>
        <taxon>Pseudomonadota</taxon>
        <taxon>Alphaproteobacteria</taxon>
        <taxon>Hyphomicrobiales</taxon>
        <taxon>Brucellaceae</taxon>
        <taxon>Brucella/Ochrobactrum group</taxon>
        <taxon>Brucella</taxon>
    </lineage>
</organism>
<reference key="1">
    <citation type="submission" date="2009-03" db="EMBL/GenBank/DDBJ databases">
        <title>Brucella melitensis ATCC 23457 whole genome shotgun sequencing project.</title>
        <authorList>
            <person name="Setubal J.C."/>
            <person name="Boyle S."/>
            <person name="Crasta O.R."/>
            <person name="Gillespie J.J."/>
            <person name="Kenyon R.W."/>
            <person name="Lu J."/>
            <person name="Mane S."/>
            <person name="Nagrani S."/>
            <person name="Shallom J.M."/>
            <person name="Shallom S."/>
            <person name="Shukla M."/>
            <person name="Snyder E.E."/>
            <person name="Sobral B.W."/>
            <person name="Wattam A.R."/>
            <person name="Will R."/>
            <person name="Williams K."/>
            <person name="Yoo H."/>
            <person name="Munk C."/>
            <person name="Tapia R."/>
            <person name="Han C."/>
            <person name="Detter J.C."/>
            <person name="Bruce D."/>
            <person name="Brettin T.S."/>
        </authorList>
    </citation>
    <scope>NUCLEOTIDE SEQUENCE [LARGE SCALE GENOMIC DNA]</scope>
    <source>
        <strain>ATCC 23457</strain>
    </source>
</reference>
<evidence type="ECO:0000255" key="1">
    <source>
        <dbReference type="HAMAP-Rule" id="MF_00823"/>
    </source>
</evidence>
<evidence type="ECO:0000255" key="2">
    <source>
        <dbReference type="PROSITE-ProRule" id="PRU01137"/>
    </source>
</evidence>
<proteinExistence type="inferred from homology"/>
<dbReference type="EC" id="2.1.3.15" evidence="1"/>
<dbReference type="EMBL" id="CP001488">
    <property type="protein sequence ID" value="ACO01745.1"/>
    <property type="molecule type" value="Genomic_DNA"/>
</dbReference>
<dbReference type="RefSeq" id="WP_002965096.1">
    <property type="nucleotide sequence ID" value="NC_012441.1"/>
</dbReference>
<dbReference type="SMR" id="C0RFS3"/>
<dbReference type="KEGG" id="bmi:BMEA_A2092"/>
<dbReference type="HOGENOM" id="CLU_015486_0_2_5"/>
<dbReference type="UniPathway" id="UPA00655">
    <property type="reaction ID" value="UER00711"/>
</dbReference>
<dbReference type="Proteomes" id="UP000001748">
    <property type="component" value="Chromosome I"/>
</dbReference>
<dbReference type="GO" id="GO:0009317">
    <property type="term" value="C:acetyl-CoA carboxylase complex"/>
    <property type="evidence" value="ECO:0007669"/>
    <property type="project" value="InterPro"/>
</dbReference>
<dbReference type="GO" id="GO:0003989">
    <property type="term" value="F:acetyl-CoA carboxylase activity"/>
    <property type="evidence" value="ECO:0007669"/>
    <property type="project" value="InterPro"/>
</dbReference>
<dbReference type="GO" id="GO:0005524">
    <property type="term" value="F:ATP binding"/>
    <property type="evidence" value="ECO:0007669"/>
    <property type="project" value="UniProtKB-KW"/>
</dbReference>
<dbReference type="GO" id="GO:0016743">
    <property type="term" value="F:carboxyl- or carbamoyltransferase activity"/>
    <property type="evidence" value="ECO:0007669"/>
    <property type="project" value="UniProtKB-UniRule"/>
</dbReference>
<dbReference type="GO" id="GO:0006633">
    <property type="term" value="P:fatty acid biosynthetic process"/>
    <property type="evidence" value="ECO:0007669"/>
    <property type="project" value="UniProtKB-KW"/>
</dbReference>
<dbReference type="GO" id="GO:2001295">
    <property type="term" value="P:malonyl-CoA biosynthetic process"/>
    <property type="evidence" value="ECO:0007669"/>
    <property type="project" value="UniProtKB-UniRule"/>
</dbReference>
<dbReference type="Gene3D" id="3.90.226.10">
    <property type="entry name" value="2-enoyl-CoA Hydratase, Chain A, domain 1"/>
    <property type="match status" value="1"/>
</dbReference>
<dbReference type="HAMAP" id="MF_00823">
    <property type="entry name" value="AcetylCoA_CT_alpha"/>
    <property type="match status" value="1"/>
</dbReference>
<dbReference type="InterPro" id="IPR001095">
    <property type="entry name" value="Acetyl_CoA_COase_a_su"/>
</dbReference>
<dbReference type="InterPro" id="IPR029045">
    <property type="entry name" value="ClpP/crotonase-like_dom_sf"/>
</dbReference>
<dbReference type="InterPro" id="IPR011763">
    <property type="entry name" value="COA_CT_C"/>
</dbReference>
<dbReference type="NCBIfam" id="TIGR00513">
    <property type="entry name" value="accA"/>
    <property type="match status" value="1"/>
</dbReference>
<dbReference type="NCBIfam" id="NF041504">
    <property type="entry name" value="AccA_sub"/>
    <property type="match status" value="1"/>
</dbReference>
<dbReference type="NCBIfam" id="NF004344">
    <property type="entry name" value="PRK05724.1"/>
    <property type="match status" value="1"/>
</dbReference>
<dbReference type="PANTHER" id="PTHR42853">
    <property type="entry name" value="ACETYL-COENZYME A CARBOXYLASE CARBOXYL TRANSFERASE SUBUNIT ALPHA"/>
    <property type="match status" value="1"/>
</dbReference>
<dbReference type="PANTHER" id="PTHR42853:SF3">
    <property type="entry name" value="ACETYL-COENZYME A CARBOXYLASE CARBOXYL TRANSFERASE SUBUNIT ALPHA, CHLOROPLASTIC"/>
    <property type="match status" value="1"/>
</dbReference>
<dbReference type="Pfam" id="PF03255">
    <property type="entry name" value="ACCA"/>
    <property type="match status" value="1"/>
</dbReference>
<dbReference type="PRINTS" id="PR01069">
    <property type="entry name" value="ACCCTRFRASEA"/>
</dbReference>
<dbReference type="SUPFAM" id="SSF52096">
    <property type="entry name" value="ClpP/crotonase"/>
    <property type="match status" value="1"/>
</dbReference>
<dbReference type="PROSITE" id="PS50989">
    <property type="entry name" value="COA_CT_CTER"/>
    <property type="match status" value="1"/>
</dbReference>
<accession>C0RFS3</accession>
<keyword id="KW-0067">ATP-binding</keyword>
<keyword id="KW-0963">Cytoplasm</keyword>
<keyword id="KW-0275">Fatty acid biosynthesis</keyword>
<keyword id="KW-0276">Fatty acid metabolism</keyword>
<keyword id="KW-0444">Lipid biosynthesis</keyword>
<keyword id="KW-0443">Lipid metabolism</keyword>
<keyword id="KW-0547">Nucleotide-binding</keyword>
<keyword id="KW-0808">Transferase</keyword>
<sequence length="317" mass="35013">MYNYLDFEKPVADLEGQILELKKLAQEQGSVEMGDEISRLEKRSADALKDIYRKLTPWQKAQIARHPDRPHCLEYIDRLFTEFTPLAGDRKFANDEALQAGFGRFNGTPVAIIGQEKGSDTKTRLKHNFGSARPEGYRKAVRIMEMADRFQLPLITFVDTAGAYPGVSAEERGQAEAIARSTAECLKLRVPVISIIIGEGGSGGAIAIAVANRVYMLEHSIYSVISPEGAASILWHDSTRAKDAASNMRITAQDLFDLKIIDGIIPEPLGGAHRGKESVIDATGDIIAASLRSMKDIDGETLKQERRQKFLEIGRNI</sequence>
<name>ACCA_BRUMB</name>
<feature type="chain" id="PRO_1000148734" description="Acetyl-coenzyme A carboxylase carboxyl transferase subunit alpha">
    <location>
        <begin position="1"/>
        <end position="317"/>
    </location>
</feature>
<feature type="domain" description="CoA carboxyltransferase C-terminal" evidence="2">
    <location>
        <begin position="40"/>
        <end position="293"/>
    </location>
</feature>
<gene>
    <name evidence="1" type="primary">accA</name>
    <name type="ordered locus">BMEA_A2092</name>
</gene>